<proteinExistence type="inferred from homology"/>
<feature type="chain" id="PRO_0000219676" description="Photosystem II reaction center protein L">
    <location>
        <begin position="1"/>
        <end position="38"/>
    </location>
</feature>
<feature type="transmembrane region" description="Helical" evidence="1">
    <location>
        <begin position="17"/>
        <end position="37"/>
    </location>
</feature>
<name>PSBL_ANACO</name>
<gene>
    <name evidence="1" type="primary">psbL</name>
</gene>
<comment type="function">
    <text evidence="1">One of the components of the core complex of photosystem II (PSII). PSII is a light-driven water:plastoquinone oxidoreductase that uses light energy to abstract electrons from H(2)O, generating O(2) and a proton gradient subsequently used for ATP formation. It consists of a core antenna complex that captures photons, and an electron transfer chain that converts photonic excitation into a charge separation. This subunit is found at the monomer-monomer interface and is required for correct PSII assembly and/or dimerization.</text>
</comment>
<comment type="subunit">
    <text evidence="1">PSII is composed of 1 copy each of membrane proteins PsbA, PsbB, PsbC, PsbD, PsbE, PsbF, PsbH, PsbI, PsbJ, PsbK, PsbL, PsbM, PsbT, PsbX, PsbY, PsbZ, Psb30/Ycf12, at least 3 peripheral proteins of the oxygen-evolving complex and a large number of cofactors. It forms dimeric complexes.</text>
</comment>
<comment type="subcellular location">
    <subcellularLocation>
        <location evidence="1">Plastid</location>
        <location evidence="1">Chloroplast thylakoid membrane</location>
        <topology evidence="1">Single-pass membrane protein</topology>
    </subcellularLocation>
</comment>
<comment type="similarity">
    <text evidence="1">Belongs to the PsbL family.</text>
</comment>
<organism>
    <name type="scientific">Ananas comosus</name>
    <name type="common">Pineapple</name>
    <name type="synonym">Ananas ananas</name>
    <dbReference type="NCBI Taxonomy" id="4615"/>
    <lineage>
        <taxon>Eukaryota</taxon>
        <taxon>Viridiplantae</taxon>
        <taxon>Streptophyta</taxon>
        <taxon>Embryophyta</taxon>
        <taxon>Tracheophyta</taxon>
        <taxon>Spermatophyta</taxon>
        <taxon>Magnoliopsida</taxon>
        <taxon>Liliopsida</taxon>
        <taxon>Poales</taxon>
        <taxon>Bromeliaceae</taxon>
        <taxon>Bromelioideae</taxon>
        <taxon>Ananas</taxon>
    </lineage>
</organism>
<protein>
    <recommendedName>
        <fullName evidence="1">Photosystem II reaction center protein L</fullName>
        <shortName evidence="1">PSII-L</shortName>
    </recommendedName>
</protein>
<evidence type="ECO:0000255" key="1">
    <source>
        <dbReference type="HAMAP-Rule" id="MF_01317"/>
    </source>
</evidence>
<keyword id="KW-0150">Chloroplast</keyword>
<keyword id="KW-0472">Membrane</keyword>
<keyword id="KW-0602">Photosynthesis</keyword>
<keyword id="KW-0604">Photosystem II</keyword>
<keyword id="KW-0934">Plastid</keyword>
<keyword id="KW-0674">Reaction center</keyword>
<keyword id="KW-0793">Thylakoid</keyword>
<keyword id="KW-0812">Transmembrane</keyword>
<keyword id="KW-1133">Transmembrane helix</keyword>
<geneLocation type="chloroplast"/>
<sequence>MTQSNPNEQNVELNRTSLYWGLLLIFVLAVLFSNYFFN</sequence>
<accession>Q67HN6</accession>
<dbReference type="EMBL" id="AY147554">
    <property type="protein sequence ID" value="AAN32318.1"/>
    <property type="molecule type" value="Genomic_DNA"/>
</dbReference>
<dbReference type="RefSeq" id="YP_009116357.1">
    <property type="nucleotide sequence ID" value="NC_026220.1"/>
</dbReference>
<dbReference type="SMR" id="Q67HN6"/>
<dbReference type="GeneID" id="22909422"/>
<dbReference type="OrthoDB" id="589260at2759"/>
<dbReference type="Proteomes" id="UP000515123">
    <property type="component" value="Chloroplast Pltd"/>
</dbReference>
<dbReference type="GO" id="GO:0009535">
    <property type="term" value="C:chloroplast thylakoid membrane"/>
    <property type="evidence" value="ECO:0007669"/>
    <property type="project" value="UniProtKB-SubCell"/>
</dbReference>
<dbReference type="GO" id="GO:0009539">
    <property type="term" value="C:photosystem II reaction center"/>
    <property type="evidence" value="ECO:0007669"/>
    <property type="project" value="InterPro"/>
</dbReference>
<dbReference type="GO" id="GO:0015979">
    <property type="term" value="P:photosynthesis"/>
    <property type="evidence" value="ECO:0007669"/>
    <property type="project" value="UniProtKB-UniRule"/>
</dbReference>
<dbReference type="HAMAP" id="MF_01317">
    <property type="entry name" value="PSII_PsbL"/>
    <property type="match status" value="1"/>
</dbReference>
<dbReference type="InterPro" id="IPR003372">
    <property type="entry name" value="PSII_PsbL"/>
</dbReference>
<dbReference type="InterPro" id="IPR037266">
    <property type="entry name" value="PSII_PsbL_sf"/>
</dbReference>
<dbReference type="NCBIfam" id="NF001972">
    <property type="entry name" value="PRK00753.1"/>
    <property type="match status" value="1"/>
</dbReference>
<dbReference type="Pfam" id="PF02419">
    <property type="entry name" value="PsbL"/>
    <property type="match status" value="1"/>
</dbReference>
<dbReference type="SUPFAM" id="SSF161017">
    <property type="entry name" value="Photosystem II reaction center protein L, PsbL"/>
    <property type="match status" value="1"/>
</dbReference>
<reference key="1">
    <citation type="submission" date="2002-09" db="EMBL/GenBank/DDBJ databases">
        <title>Phylogenetic relationships among the major lineages of Asparagales based on a large chloroplast data set.</title>
        <authorList>
            <person name="McPherson M.A."/>
            <person name="Rai H.S."/>
            <person name="Wong W.A."/>
            <person name="Graham S.W."/>
        </authorList>
    </citation>
    <scope>NUCLEOTIDE SEQUENCE [GENOMIC DNA]</scope>
</reference>